<protein>
    <recommendedName>
        <fullName>Probable intron-encoded endonuclease bI1</fullName>
    </recommendedName>
    <component>
        <recommendedName>
            <fullName>Truncated non-functional cytochrome b</fullName>
        </recommendedName>
    </component>
    <component>
        <recommendedName>
            <fullName>Intron-encoded endonuclease bI1</fullName>
            <ecNumber>3.1.-.-</ecNumber>
        </recommendedName>
    </component>
</protein>
<geneLocation type="mitochondrion"/>
<organism>
    <name type="scientific">Neurospora crassa (strain ATCC 24698 / 74-OR23-1A / CBS 708.71 / DSM 1257 / FGSC 987)</name>
    <dbReference type="NCBI Taxonomy" id="367110"/>
    <lineage>
        <taxon>Eukaryota</taxon>
        <taxon>Fungi</taxon>
        <taxon>Dikarya</taxon>
        <taxon>Ascomycota</taxon>
        <taxon>Pezizomycotina</taxon>
        <taxon>Sordariomycetes</taxon>
        <taxon>Sordariomycetidae</taxon>
        <taxon>Sordariales</taxon>
        <taxon>Sordariaceae</taxon>
        <taxon>Neurospora</taxon>
    </lineage>
</organism>
<accession>Q35127</accession>
<accession>M1RM74</accession>
<keyword id="KW-0255">Endonuclease</keyword>
<keyword id="KW-0378">Hydrolase</keyword>
<keyword id="KW-0404">Intron homing</keyword>
<keyword id="KW-0472">Membrane</keyword>
<keyword id="KW-0496">Mitochondrion</keyword>
<keyword id="KW-0999">Mitochondrion inner membrane</keyword>
<keyword id="KW-0540">Nuclease</keyword>
<keyword id="KW-1185">Reference proteome</keyword>
<keyword id="KW-0812">Transmembrane</keyword>
<keyword id="KW-1133">Transmembrane helix</keyword>
<evidence type="ECO:0000250" key="1"/>
<evidence type="ECO:0000255" key="2">
    <source>
        <dbReference type="PROSITE-ProRule" id="PRU00968"/>
    </source>
</evidence>
<evidence type="ECO:0000255" key="3">
    <source>
        <dbReference type="PROSITE-ProRule" id="PRU00977"/>
    </source>
</evidence>
<evidence type="ECO:0000305" key="4"/>
<sequence>MRLLKSHPLLKLVNSYLIDASQPSNISYLWNFGSLLACCLIIQIVTGVTLAMHYSPNVLEAFNSIEHIMRDVNNGWLVRYLHSNTASAFFFLVYLHIGRGMYYGSYRAPRTLVWAIGTVILILMMATAFLGYQHSPKWFDISNKGSISNKGNITNSLPPLLQRWGGRINKRLFNKNLVKRGYCTSSSLNSPEMSERLQTIINELGINPVYVYEDLNQPSSWKQILHDTRDLSGVYMIINKTTKDYYIGSASNNRFYTRFCNHVIHFTGSKIVKLAIKKYELKNFAFVILDLYPNVVTKENNKELLDLEDKYLKLLVPNYNILTEAGSSFGYKHTEIDRQKMKDLYSDARREKIGSLNRGKKFSPETIEKIREKALTRPPMSEETKIKCIANTRPVVLYNLNRTIYGKYSTILEAANAINCNEKTIRRALQTEKKLVKRQWIVEDFSDK</sequence>
<reference key="1">
    <citation type="journal article" date="1988" name="Nucleic Acids Res.">
        <title>The self-splicing intron in the Neurospora apocytochrome b gene contains a long reading frame in frame with the upstream exon.</title>
        <authorList>
            <person name="Collins R.A."/>
            <person name="Reynolds C.A."/>
            <person name="Olive J."/>
        </authorList>
    </citation>
    <scope>NUCLEOTIDE SEQUENCE [GENOMIC DNA]</scope>
    <source>
        <strain>Adiopodoume-1 / FGSC 430</strain>
        <strain>ATCC 24698 / 74-OR23-1A / CBS 708.71 / DSM 1257 / FGSC 987</strain>
    </source>
</reference>
<reference key="2">
    <citation type="journal article" date="2003" name="Nature">
        <title>The genome sequence of the filamentous fungus Neurospora crassa.</title>
        <authorList>
            <person name="Galagan J.E."/>
            <person name="Calvo S.E."/>
            <person name="Borkovich K.A."/>
            <person name="Selker E.U."/>
            <person name="Read N.D."/>
            <person name="Jaffe D.B."/>
            <person name="FitzHugh W."/>
            <person name="Ma L.-J."/>
            <person name="Smirnov S."/>
            <person name="Purcell S."/>
            <person name="Rehman B."/>
            <person name="Elkins T."/>
            <person name="Engels R."/>
            <person name="Wang S."/>
            <person name="Nielsen C.B."/>
            <person name="Butler J."/>
            <person name="Endrizzi M."/>
            <person name="Qui D."/>
            <person name="Ianakiev P."/>
            <person name="Bell-Pedersen D."/>
            <person name="Nelson M.A."/>
            <person name="Werner-Washburne M."/>
            <person name="Selitrennikoff C.P."/>
            <person name="Kinsey J.A."/>
            <person name="Braun E.L."/>
            <person name="Zelter A."/>
            <person name="Schulte U."/>
            <person name="Kothe G.O."/>
            <person name="Jedd G."/>
            <person name="Mewes H.-W."/>
            <person name="Staben C."/>
            <person name="Marcotte E."/>
            <person name="Greenberg D."/>
            <person name="Roy A."/>
            <person name="Foley K."/>
            <person name="Naylor J."/>
            <person name="Stange-Thomann N."/>
            <person name="Barrett R."/>
            <person name="Gnerre S."/>
            <person name="Kamal M."/>
            <person name="Kamvysselis M."/>
            <person name="Mauceli E.W."/>
            <person name="Bielke C."/>
            <person name="Rudd S."/>
            <person name="Frishman D."/>
            <person name="Krystofova S."/>
            <person name="Rasmussen C."/>
            <person name="Metzenberg R.L."/>
            <person name="Perkins D.D."/>
            <person name="Kroken S."/>
            <person name="Cogoni C."/>
            <person name="Macino G."/>
            <person name="Catcheside D.E.A."/>
            <person name="Li W."/>
            <person name="Pratt R.J."/>
            <person name="Osmani S.A."/>
            <person name="DeSouza C.P.C."/>
            <person name="Glass N.L."/>
            <person name="Orbach M.J."/>
            <person name="Berglund J.A."/>
            <person name="Voelker R."/>
            <person name="Yarden O."/>
            <person name="Plamann M."/>
            <person name="Seiler S."/>
            <person name="Dunlap J.C."/>
            <person name="Radford A."/>
            <person name="Aramayo R."/>
            <person name="Natvig D.O."/>
            <person name="Alex L.A."/>
            <person name="Mannhaupt G."/>
            <person name="Ebbole D.J."/>
            <person name="Freitag M."/>
            <person name="Paulsen I."/>
            <person name="Sachs M.S."/>
            <person name="Lander E.S."/>
            <person name="Nusbaum C."/>
            <person name="Birren B.W."/>
        </authorList>
    </citation>
    <scope>NUCLEOTIDE SEQUENCE [LARGE SCALE GENOMIC DNA]</scope>
    <source>
        <strain>ATCC 24698 / 74-OR23-1A / CBS 708.71 / DSM 1257 / FGSC 987</strain>
    </source>
</reference>
<reference key="3">
    <citation type="book" date="2004" name="The Mycota II, Genetics and Biotechnology (2nd edition)">
        <title>Mitochondrial genetics of Neurospora.</title>
        <editorList>
            <person name="Kueck U."/>
        </editorList>
        <authorList>
            <person name="Kennell J.C."/>
            <person name="Collins R.A."/>
            <person name="Griffiths A.J.F."/>
            <person name="Nargang F.E."/>
        </authorList>
    </citation>
    <scope>GENOME REANNOTATION</scope>
    <source>
        <strain>ATCC 24698 / 74-OR23-1A / CBS 708.71 / DSM 1257 / FGSC 987</strain>
    </source>
</reference>
<gene>
    <name type="primary">bI1</name>
    <name type="synonym">cobi1</name>
    <name type="ORF">NCU16014</name>
</gene>
<proteinExistence type="inferred from homology"/>
<comment type="function">
    <text evidence="1">Mitochondrial DNA endonuclease involved in intron homing.</text>
</comment>
<comment type="subcellular location">
    <subcellularLocation>
        <location evidence="1">Mitochondrion inner membrane</location>
        <topology evidence="1">Multi-pass membrane protein</topology>
    </subcellularLocation>
</comment>
<comment type="PTM">
    <text>The mature protein may arise from proteolytic cleavage of an in-frame translation of cob exon 1 plus intron 1, containing the bI1 open reading frame.</text>
</comment>
<comment type="similarity">
    <text evidence="4">To endonucleases of group I introns of fungi and phage.</text>
</comment>
<dbReference type="EC" id="3.1.-.-"/>
<dbReference type="EMBL" id="X06884">
    <property type="protein sequence ID" value="CAA30000.1"/>
    <property type="molecule type" value="Genomic_DNA"/>
</dbReference>
<dbReference type="EMBL" id="KC683708">
    <property type="protein sequence ID" value="AGG16004.1"/>
    <property type="molecule type" value="Genomic_DNA"/>
</dbReference>
<dbReference type="PIR" id="S03127">
    <property type="entry name" value="S03127"/>
</dbReference>
<dbReference type="RefSeq" id="YP_009126716.1">
    <property type="nucleotide sequence ID" value="NC_026614.1"/>
</dbReference>
<dbReference type="SMR" id="Q35127"/>
<dbReference type="STRING" id="367110.Q35127"/>
<dbReference type="EnsemblFungi" id="AGG16004">
    <property type="protein sequence ID" value="AGG16004"/>
    <property type="gene ID" value="NCU16014"/>
</dbReference>
<dbReference type="GeneID" id="23681568"/>
<dbReference type="KEGG" id="ncr:NCU16014"/>
<dbReference type="VEuPathDB" id="FungiDB:NCU16014"/>
<dbReference type="InParanoid" id="Q35127"/>
<dbReference type="OrthoDB" id="2203429at2759"/>
<dbReference type="Proteomes" id="UP000001805">
    <property type="component" value="Mitochondrion"/>
</dbReference>
<dbReference type="GO" id="GO:0016020">
    <property type="term" value="C:membrane"/>
    <property type="evidence" value="ECO:0000318"/>
    <property type="project" value="GO_Central"/>
</dbReference>
<dbReference type="GO" id="GO:0005739">
    <property type="term" value="C:mitochondrion"/>
    <property type="evidence" value="ECO:0007669"/>
    <property type="project" value="UniProtKB-KW"/>
</dbReference>
<dbReference type="GO" id="GO:0045275">
    <property type="term" value="C:respiratory chain complex III"/>
    <property type="evidence" value="ECO:0000318"/>
    <property type="project" value="GO_Central"/>
</dbReference>
<dbReference type="GO" id="GO:0003677">
    <property type="term" value="F:DNA binding"/>
    <property type="evidence" value="ECO:0007669"/>
    <property type="project" value="InterPro"/>
</dbReference>
<dbReference type="GO" id="GO:0004519">
    <property type="term" value="F:endonuclease activity"/>
    <property type="evidence" value="ECO:0007669"/>
    <property type="project" value="UniProtKB-KW"/>
</dbReference>
<dbReference type="GO" id="GO:0006314">
    <property type="term" value="P:intron homing"/>
    <property type="evidence" value="ECO:0007669"/>
    <property type="project" value="UniProtKB-KW"/>
</dbReference>
<dbReference type="GO" id="GO:0006122">
    <property type="term" value="P:mitochondrial electron transport, ubiquinol to cytochrome c"/>
    <property type="evidence" value="ECO:0000318"/>
    <property type="project" value="GO_Central"/>
</dbReference>
<dbReference type="GO" id="GO:1902600">
    <property type="term" value="P:proton transmembrane transport"/>
    <property type="evidence" value="ECO:0007669"/>
    <property type="project" value="GOC"/>
</dbReference>
<dbReference type="CDD" id="cd00284">
    <property type="entry name" value="Cytochrome_b_N"/>
    <property type="match status" value="1"/>
</dbReference>
<dbReference type="CDD" id="cd10445">
    <property type="entry name" value="GIY-YIG_bI1_like"/>
    <property type="match status" value="1"/>
</dbReference>
<dbReference type="FunFam" id="1.20.810.10:FF:000017">
    <property type="entry name" value="Probable intron-encoded endonuclease bI1"/>
    <property type="match status" value="1"/>
</dbReference>
<dbReference type="Gene3D" id="1.20.810.10">
    <property type="entry name" value="Cytochrome Bc1 Complex, Chain C"/>
    <property type="match status" value="1"/>
</dbReference>
<dbReference type="Gene3D" id="3.40.1440.10">
    <property type="entry name" value="GIY-YIG endonuclease"/>
    <property type="match status" value="1"/>
</dbReference>
<dbReference type="InterPro" id="IPR005797">
    <property type="entry name" value="Cyt_b/b6_N"/>
</dbReference>
<dbReference type="InterPro" id="IPR027387">
    <property type="entry name" value="Cytb/b6-like_sf"/>
</dbReference>
<dbReference type="InterPro" id="IPR048259">
    <property type="entry name" value="Cytochrome_b_N_euk/bac"/>
</dbReference>
<dbReference type="InterPro" id="IPR016174">
    <property type="entry name" value="Di-haem_cyt_TM"/>
</dbReference>
<dbReference type="InterPro" id="IPR000305">
    <property type="entry name" value="GIY-YIG_endonuc"/>
</dbReference>
<dbReference type="InterPro" id="IPR035901">
    <property type="entry name" value="GIY-YIG_endonuc_sf"/>
</dbReference>
<dbReference type="InterPro" id="IPR006350">
    <property type="entry name" value="Intron_endoG1"/>
</dbReference>
<dbReference type="InterPro" id="IPR003647">
    <property type="entry name" value="Intron_nuc_1_rpt"/>
</dbReference>
<dbReference type="InterPro" id="IPR010896">
    <property type="entry name" value="NUMOD1"/>
</dbReference>
<dbReference type="InterPro" id="IPR003611">
    <property type="entry name" value="NUMOD3"/>
</dbReference>
<dbReference type="NCBIfam" id="TIGR01453">
    <property type="entry name" value="grpIintron_endo"/>
    <property type="match status" value="1"/>
</dbReference>
<dbReference type="PANTHER" id="PTHR19271">
    <property type="entry name" value="CYTOCHROME B"/>
    <property type="match status" value="1"/>
</dbReference>
<dbReference type="PANTHER" id="PTHR19271:SF16">
    <property type="entry name" value="CYTOCHROME B"/>
    <property type="match status" value="1"/>
</dbReference>
<dbReference type="Pfam" id="PF00033">
    <property type="entry name" value="Cytochrome_B"/>
    <property type="match status" value="1"/>
</dbReference>
<dbReference type="Pfam" id="PF01541">
    <property type="entry name" value="GIY-YIG"/>
    <property type="match status" value="1"/>
</dbReference>
<dbReference type="Pfam" id="PF07453">
    <property type="entry name" value="NUMOD1"/>
    <property type="match status" value="1"/>
</dbReference>
<dbReference type="SMART" id="SM00465">
    <property type="entry name" value="GIYc"/>
    <property type="match status" value="1"/>
</dbReference>
<dbReference type="SMART" id="SM00497">
    <property type="entry name" value="IENR1"/>
    <property type="match status" value="1"/>
</dbReference>
<dbReference type="SMART" id="SM00496">
    <property type="entry name" value="IENR2"/>
    <property type="match status" value="2"/>
</dbReference>
<dbReference type="SUPFAM" id="SSF64496">
    <property type="entry name" value="DNA-binding domain of intron-encoded endonucleases"/>
    <property type="match status" value="1"/>
</dbReference>
<dbReference type="SUPFAM" id="SSF82771">
    <property type="entry name" value="GIY-YIG endonuclease"/>
    <property type="match status" value="1"/>
</dbReference>
<dbReference type="SUPFAM" id="SSF81342">
    <property type="entry name" value="Transmembrane di-heme cytochromes"/>
    <property type="match status" value="1"/>
</dbReference>
<dbReference type="PROSITE" id="PS51002">
    <property type="entry name" value="CYTB_NTER"/>
    <property type="match status" value="1"/>
</dbReference>
<dbReference type="PROSITE" id="PS50164">
    <property type="entry name" value="GIY_YIG"/>
    <property type="match status" value="1"/>
</dbReference>
<feature type="chain" id="PRO_0000414731" description="Truncated non-functional cytochrome b">
    <location>
        <begin position="1"/>
        <end status="unknown"/>
    </location>
</feature>
<feature type="chain" id="PRO_0000414732" description="Intron-encoded endonuclease bI1">
    <location>
        <begin status="unknown"/>
        <end position="448"/>
    </location>
</feature>
<feature type="transmembrane region" description="Helical" evidence="2">
    <location>
        <begin position="32"/>
        <end position="52"/>
    </location>
</feature>
<feature type="transmembrane region" description="Helical" evidence="2">
    <location>
        <begin position="86"/>
        <end position="106"/>
    </location>
</feature>
<feature type="transmembrane region" description="Helical" evidence="2">
    <location>
        <begin position="112"/>
        <end position="132"/>
    </location>
</feature>
<feature type="domain" description="GIY-YIG" evidence="3">
    <location>
        <begin position="230"/>
        <end position="321"/>
    </location>
</feature>
<feature type="region of interest" description="cob exon 1 encoded">
    <location>
        <begin position="1"/>
        <end position="132"/>
    </location>
</feature>
<feature type="region of interest" description="cob intron 1 encoded">
    <location>
        <begin position="133"/>
        <end position="448"/>
    </location>
</feature>
<feature type="sequence variant" description="In strain: FGSC 430.">
    <original>W</original>
    <variation>R</variation>
    <location>
        <position position="221"/>
    </location>
</feature>
<feature type="sequence variant" description="In strain: FGSC 430.">
    <original>F</original>
    <variation>L</variation>
    <location>
        <position position="362"/>
    </location>
</feature>
<name>MBI1_NEUCR</name>